<evidence type="ECO:0000255" key="1">
    <source>
        <dbReference type="HAMAP-Rule" id="MF_00376"/>
    </source>
</evidence>
<evidence type="ECO:0000305" key="2"/>
<evidence type="ECO:0007829" key="3">
    <source>
        <dbReference type="PDB" id="2GRJ"/>
    </source>
</evidence>
<gene>
    <name evidence="1" type="primary">coaE</name>
    <name type="ordered locus">TM_1387</name>
</gene>
<accession>Q9X1A7</accession>
<keyword id="KW-0002">3D-structure</keyword>
<keyword id="KW-0067">ATP-binding</keyword>
<keyword id="KW-0173">Coenzyme A biosynthesis</keyword>
<keyword id="KW-0963">Cytoplasm</keyword>
<keyword id="KW-0418">Kinase</keyword>
<keyword id="KW-0547">Nucleotide-binding</keyword>
<keyword id="KW-1185">Reference proteome</keyword>
<keyword id="KW-0808">Transferase</keyword>
<feature type="chain" id="PRO_0000173021" description="Dephospho-CoA kinase">
    <location>
        <begin position="1"/>
        <end position="180"/>
    </location>
</feature>
<feature type="domain" description="DPCK" evidence="1">
    <location>
        <begin position="2"/>
        <end position="180"/>
    </location>
</feature>
<feature type="binding site" evidence="1">
    <location>
        <begin position="10"/>
        <end position="15"/>
    </location>
    <ligand>
        <name>ATP</name>
        <dbReference type="ChEBI" id="CHEBI:30616"/>
    </ligand>
</feature>
<feature type="strand" evidence="3">
    <location>
        <begin position="1"/>
        <end position="6"/>
    </location>
</feature>
<feature type="helix" evidence="3">
    <location>
        <begin position="13"/>
        <end position="24"/>
    </location>
</feature>
<feature type="strand" evidence="3">
    <location>
        <begin position="27"/>
        <end position="30"/>
    </location>
</feature>
<feature type="helix" evidence="3">
    <location>
        <begin position="31"/>
        <end position="41"/>
    </location>
</feature>
<feature type="helix" evidence="3">
    <location>
        <begin position="43"/>
        <end position="50"/>
    </location>
</feature>
<feature type="helix" evidence="3">
    <location>
        <begin position="52"/>
        <end position="54"/>
    </location>
</feature>
<feature type="strand" evidence="3">
    <location>
        <begin position="55"/>
        <end position="60"/>
    </location>
</feature>
<feature type="helix" evidence="3">
    <location>
        <begin position="62"/>
        <end position="69"/>
    </location>
</feature>
<feature type="helix" evidence="3">
    <location>
        <begin position="73"/>
        <end position="96"/>
    </location>
</feature>
<feature type="strand" evidence="3">
    <location>
        <begin position="100"/>
        <end position="105"/>
    </location>
</feature>
<feature type="turn" evidence="3">
    <location>
        <begin position="107"/>
        <end position="113"/>
    </location>
</feature>
<feature type="helix" evidence="3">
    <location>
        <begin position="114"/>
        <end position="117"/>
    </location>
</feature>
<feature type="strand" evidence="3">
    <location>
        <begin position="119"/>
        <end position="125"/>
    </location>
</feature>
<feature type="helix" evidence="3">
    <location>
        <begin position="128"/>
        <end position="134"/>
    </location>
</feature>
<feature type="helix" evidence="3">
    <location>
        <begin position="138"/>
        <end position="142"/>
    </location>
</feature>
<feature type="strand" evidence="3">
    <location>
        <begin position="152"/>
        <end position="156"/>
    </location>
</feature>
<feature type="helix" evidence="3">
    <location>
        <begin position="161"/>
        <end position="175"/>
    </location>
</feature>
<proteinExistence type="evidence at protein level"/>
<reference key="1">
    <citation type="journal article" date="1999" name="Nature">
        <title>Evidence for lateral gene transfer between Archaea and Bacteria from genome sequence of Thermotoga maritima.</title>
        <authorList>
            <person name="Nelson K.E."/>
            <person name="Clayton R.A."/>
            <person name="Gill S.R."/>
            <person name="Gwinn M.L."/>
            <person name="Dodson R.J."/>
            <person name="Haft D.H."/>
            <person name="Hickey E.K."/>
            <person name="Peterson J.D."/>
            <person name="Nelson W.C."/>
            <person name="Ketchum K.A."/>
            <person name="McDonald L.A."/>
            <person name="Utterback T.R."/>
            <person name="Malek J.A."/>
            <person name="Linher K.D."/>
            <person name="Garrett M.M."/>
            <person name="Stewart A.M."/>
            <person name="Cotton M.D."/>
            <person name="Pratt M.S."/>
            <person name="Phillips C.A."/>
            <person name="Richardson D.L."/>
            <person name="Heidelberg J.F."/>
            <person name="Sutton G.G."/>
            <person name="Fleischmann R.D."/>
            <person name="Eisen J.A."/>
            <person name="White O."/>
            <person name="Salzberg S.L."/>
            <person name="Smith H.O."/>
            <person name="Venter J.C."/>
            <person name="Fraser C.M."/>
        </authorList>
    </citation>
    <scope>NUCLEOTIDE SEQUENCE [LARGE SCALE GENOMIC DNA]</scope>
    <source>
        <strain>ATCC 43589 / DSM 3109 / JCM 10099 / NBRC 100826 / MSB8</strain>
    </source>
</reference>
<comment type="function">
    <text evidence="1">Catalyzes the phosphorylation of the 3'-hydroxyl group of dephosphocoenzyme A to form coenzyme A.</text>
</comment>
<comment type="catalytic activity">
    <reaction evidence="1">
        <text>3'-dephospho-CoA + ATP = ADP + CoA + H(+)</text>
        <dbReference type="Rhea" id="RHEA:18245"/>
        <dbReference type="ChEBI" id="CHEBI:15378"/>
        <dbReference type="ChEBI" id="CHEBI:30616"/>
        <dbReference type="ChEBI" id="CHEBI:57287"/>
        <dbReference type="ChEBI" id="CHEBI:57328"/>
        <dbReference type="ChEBI" id="CHEBI:456216"/>
        <dbReference type="EC" id="2.7.1.24"/>
    </reaction>
</comment>
<comment type="pathway">
    <text evidence="1">Cofactor biosynthesis; coenzyme A biosynthesis; CoA from (R)-pantothenate: step 5/5.</text>
</comment>
<comment type="subcellular location">
    <subcellularLocation>
        <location evidence="1">Cytoplasm</location>
    </subcellularLocation>
</comment>
<comment type="similarity">
    <text evidence="1 2">Belongs to the CoaE family.</text>
</comment>
<organism>
    <name type="scientific">Thermotoga maritima (strain ATCC 43589 / DSM 3109 / JCM 10099 / NBRC 100826 / MSB8)</name>
    <dbReference type="NCBI Taxonomy" id="243274"/>
    <lineage>
        <taxon>Bacteria</taxon>
        <taxon>Thermotogati</taxon>
        <taxon>Thermotogota</taxon>
        <taxon>Thermotogae</taxon>
        <taxon>Thermotogales</taxon>
        <taxon>Thermotogaceae</taxon>
        <taxon>Thermotoga</taxon>
    </lineage>
</organism>
<sequence length="180" mass="20331">MVIGVTGKIGTGKSTVCEILKNKYGAHVVNVDRIGHEVLEEVKEKLVELFGGSVLEDGKVNRKKLAGIVFESRENLKKLELLVHPLMKKRVQEIINKTSGLIVIEAALLKRMGLDQLCDHVITVVASRETILKRNREADRRLKFQEDIVPQGIVVANNSTLEDLEKKVEEVMKLVWEKRE</sequence>
<name>COAE_THEMA</name>
<dbReference type="EC" id="2.7.1.24" evidence="1"/>
<dbReference type="EMBL" id="AE000512">
    <property type="protein sequence ID" value="AAD36457.1"/>
    <property type="molecule type" value="Genomic_DNA"/>
</dbReference>
<dbReference type="PIR" id="D72262">
    <property type="entry name" value="D72262"/>
</dbReference>
<dbReference type="RefSeq" id="NP_229188.1">
    <property type="nucleotide sequence ID" value="NC_000853.1"/>
</dbReference>
<dbReference type="RefSeq" id="WP_004081589.1">
    <property type="nucleotide sequence ID" value="NC_000853.1"/>
</dbReference>
<dbReference type="PDB" id="2GRJ">
    <property type="method" value="X-ray"/>
    <property type="resolution" value="2.60 A"/>
    <property type="chains" value="A/B/C/D/E/F/G/H=1-180"/>
</dbReference>
<dbReference type="PDBsum" id="2GRJ"/>
<dbReference type="SMR" id="Q9X1A7"/>
<dbReference type="FunCoup" id="Q9X1A7">
    <property type="interactions" value="328"/>
</dbReference>
<dbReference type="STRING" id="243274.TM_1387"/>
<dbReference type="PaxDb" id="243274-THEMA_07390"/>
<dbReference type="EnsemblBacteria" id="AAD36457">
    <property type="protein sequence ID" value="AAD36457"/>
    <property type="gene ID" value="TM_1387"/>
</dbReference>
<dbReference type="KEGG" id="tma:TM1387"/>
<dbReference type="KEGG" id="tmi:THEMA_07390"/>
<dbReference type="KEGG" id="tmm:Tmari_1394"/>
<dbReference type="KEGG" id="tmw:THMA_1414"/>
<dbReference type="eggNOG" id="COG0237">
    <property type="taxonomic scope" value="Bacteria"/>
</dbReference>
<dbReference type="InParanoid" id="Q9X1A7"/>
<dbReference type="OrthoDB" id="9812943at2"/>
<dbReference type="UniPathway" id="UPA00241">
    <property type="reaction ID" value="UER00356"/>
</dbReference>
<dbReference type="EvolutionaryTrace" id="Q9X1A7"/>
<dbReference type="Proteomes" id="UP000008183">
    <property type="component" value="Chromosome"/>
</dbReference>
<dbReference type="GO" id="GO:0005737">
    <property type="term" value="C:cytoplasm"/>
    <property type="evidence" value="ECO:0007669"/>
    <property type="project" value="UniProtKB-SubCell"/>
</dbReference>
<dbReference type="GO" id="GO:0005524">
    <property type="term" value="F:ATP binding"/>
    <property type="evidence" value="ECO:0007669"/>
    <property type="project" value="UniProtKB-UniRule"/>
</dbReference>
<dbReference type="GO" id="GO:0004140">
    <property type="term" value="F:dephospho-CoA kinase activity"/>
    <property type="evidence" value="ECO:0000318"/>
    <property type="project" value="GO_Central"/>
</dbReference>
<dbReference type="GO" id="GO:0015937">
    <property type="term" value="P:coenzyme A biosynthetic process"/>
    <property type="evidence" value="ECO:0000318"/>
    <property type="project" value="GO_Central"/>
</dbReference>
<dbReference type="CDD" id="cd02022">
    <property type="entry name" value="DPCK"/>
    <property type="match status" value="1"/>
</dbReference>
<dbReference type="FunFam" id="3.40.50.300:FF:004418">
    <property type="entry name" value="Dephospho-CoA kinase"/>
    <property type="match status" value="1"/>
</dbReference>
<dbReference type="Gene3D" id="3.40.50.300">
    <property type="entry name" value="P-loop containing nucleotide triphosphate hydrolases"/>
    <property type="match status" value="1"/>
</dbReference>
<dbReference type="HAMAP" id="MF_00376">
    <property type="entry name" value="Dephospho_CoA_kinase"/>
    <property type="match status" value="1"/>
</dbReference>
<dbReference type="InterPro" id="IPR001977">
    <property type="entry name" value="Depp_CoAkinase"/>
</dbReference>
<dbReference type="InterPro" id="IPR027417">
    <property type="entry name" value="P-loop_NTPase"/>
</dbReference>
<dbReference type="NCBIfam" id="TIGR00152">
    <property type="entry name" value="dephospho-CoA kinase"/>
    <property type="match status" value="1"/>
</dbReference>
<dbReference type="PANTHER" id="PTHR10695:SF46">
    <property type="entry name" value="BIFUNCTIONAL COENZYME A SYNTHASE-RELATED"/>
    <property type="match status" value="1"/>
</dbReference>
<dbReference type="PANTHER" id="PTHR10695">
    <property type="entry name" value="DEPHOSPHO-COA KINASE-RELATED"/>
    <property type="match status" value="1"/>
</dbReference>
<dbReference type="Pfam" id="PF01121">
    <property type="entry name" value="CoaE"/>
    <property type="match status" value="1"/>
</dbReference>
<dbReference type="SUPFAM" id="SSF52540">
    <property type="entry name" value="P-loop containing nucleoside triphosphate hydrolases"/>
    <property type="match status" value="1"/>
</dbReference>
<dbReference type="PROSITE" id="PS51219">
    <property type="entry name" value="DPCK"/>
    <property type="match status" value="1"/>
</dbReference>
<protein>
    <recommendedName>
        <fullName evidence="1">Dephospho-CoA kinase</fullName>
        <ecNumber evidence="1">2.7.1.24</ecNumber>
    </recommendedName>
    <alternativeName>
        <fullName evidence="1">Dephosphocoenzyme A kinase</fullName>
    </alternativeName>
</protein>